<feature type="chain" id="PRO_0000100550" description="Phosphoribosylformylglycinamidine synthase subunit PurQ">
    <location>
        <begin position="1"/>
        <end position="223"/>
    </location>
</feature>
<feature type="domain" description="Glutamine amidotransferase type-1" evidence="1">
    <location>
        <begin position="4"/>
        <end position="223"/>
    </location>
</feature>
<feature type="active site" description="Nucleophile" evidence="1">
    <location>
        <position position="87"/>
    </location>
</feature>
<feature type="active site" evidence="1">
    <location>
        <position position="195"/>
    </location>
</feature>
<feature type="active site" evidence="1">
    <location>
        <position position="197"/>
    </location>
</feature>
<dbReference type="EC" id="6.3.5.3" evidence="1"/>
<dbReference type="EC" id="3.5.1.2" evidence="1"/>
<dbReference type="EMBL" id="BA000035">
    <property type="protein sequence ID" value="BAC19291.1"/>
    <property type="molecule type" value="Genomic_DNA"/>
</dbReference>
<dbReference type="RefSeq" id="WP_006769161.1">
    <property type="nucleotide sequence ID" value="NC_004369.1"/>
</dbReference>
<dbReference type="SMR" id="Q8FMM2"/>
<dbReference type="STRING" id="196164.gene:10742927"/>
<dbReference type="KEGG" id="cef:CE2481"/>
<dbReference type="eggNOG" id="COG0047">
    <property type="taxonomic scope" value="Bacteria"/>
</dbReference>
<dbReference type="HOGENOM" id="CLU_001031_3_1_11"/>
<dbReference type="OrthoDB" id="9804441at2"/>
<dbReference type="UniPathway" id="UPA00074">
    <property type="reaction ID" value="UER00128"/>
</dbReference>
<dbReference type="Proteomes" id="UP000001409">
    <property type="component" value="Chromosome"/>
</dbReference>
<dbReference type="GO" id="GO:0005737">
    <property type="term" value="C:cytoplasm"/>
    <property type="evidence" value="ECO:0007669"/>
    <property type="project" value="UniProtKB-SubCell"/>
</dbReference>
<dbReference type="GO" id="GO:0005524">
    <property type="term" value="F:ATP binding"/>
    <property type="evidence" value="ECO:0007669"/>
    <property type="project" value="UniProtKB-KW"/>
</dbReference>
<dbReference type="GO" id="GO:0004359">
    <property type="term" value="F:glutaminase activity"/>
    <property type="evidence" value="ECO:0007669"/>
    <property type="project" value="UniProtKB-EC"/>
</dbReference>
<dbReference type="GO" id="GO:0004642">
    <property type="term" value="F:phosphoribosylformylglycinamidine synthase activity"/>
    <property type="evidence" value="ECO:0007669"/>
    <property type="project" value="UniProtKB-UniRule"/>
</dbReference>
<dbReference type="GO" id="GO:0006189">
    <property type="term" value="P:'de novo' IMP biosynthetic process"/>
    <property type="evidence" value="ECO:0007669"/>
    <property type="project" value="UniProtKB-UniRule"/>
</dbReference>
<dbReference type="CDD" id="cd01740">
    <property type="entry name" value="GATase1_FGAR_AT"/>
    <property type="match status" value="1"/>
</dbReference>
<dbReference type="FunFam" id="3.40.50.880:FF:000019">
    <property type="entry name" value="Phosphoribosylformylglycinamidine synthase subunit PurQ"/>
    <property type="match status" value="1"/>
</dbReference>
<dbReference type="Gene3D" id="3.40.50.880">
    <property type="match status" value="1"/>
</dbReference>
<dbReference type="HAMAP" id="MF_00421">
    <property type="entry name" value="PurQ"/>
    <property type="match status" value="1"/>
</dbReference>
<dbReference type="InterPro" id="IPR029062">
    <property type="entry name" value="Class_I_gatase-like"/>
</dbReference>
<dbReference type="InterPro" id="IPR010075">
    <property type="entry name" value="PRibForGlyAmidine_synth_PurQ"/>
</dbReference>
<dbReference type="NCBIfam" id="TIGR01737">
    <property type="entry name" value="FGAM_synth_I"/>
    <property type="match status" value="1"/>
</dbReference>
<dbReference type="NCBIfam" id="NF002957">
    <property type="entry name" value="PRK03619.1"/>
    <property type="match status" value="1"/>
</dbReference>
<dbReference type="PANTHER" id="PTHR47552">
    <property type="entry name" value="PHOSPHORIBOSYLFORMYLGLYCINAMIDINE SYNTHASE SUBUNIT PURQ"/>
    <property type="match status" value="1"/>
</dbReference>
<dbReference type="PANTHER" id="PTHR47552:SF1">
    <property type="entry name" value="PHOSPHORIBOSYLFORMYLGLYCINAMIDINE SYNTHASE SUBUNIT PURQ"/>
    <property type="match status" value="1"/>
</dbReference>
<dbReference type="Pfam" id="PF13507">
    <property type="entry name" value="GATase_5"/>
    <property type="match status" value="1"/>
</dbReference>
<dbReference type="PIRSF" id="PIRSF001586">
    <property type="entry name" value="FGAM_synth_I"/>
    <property type="match status" value="1"/>
</dbReference>
<dbReference type="SMART" id="SM01211">
    <property type="entry name" value="GATase_5"/>
    <property type="match status" value="1"/>
</dbReference>
<dbReference type="SUPFAM" id="SSF52317">
    <property type="entry name" value="Class I glutamine amidotransferase-like"/>
    <property type="match status" value="1"/>
</dbReference>
<dbReference type="PROSITE" id="PS51273">
    <property type="entry name" value="GATASE_TYPE_1"/>
    <property type="match status" value="1"/>
</dbReference>
<sequence length="223" mass="23681">MSAKIGVITFPGTLDDVDALRAVRIAGAEPVNLWHADEDLRGVDAVVVPGGFSYGDYLRTGAISALAPVMQSVIEAAGRGMPVLGICNGFQILTEARLLPGALTRNQGLHFHCVDTHLEVVNTDTAWTGTLEQGQKILVPAKHGEGRFQAEPDTIRMLEEEGRVVFRYTDNFNGSINGIAGITNETGRVVGLMPHPEHAVETLTGPSVDGLELFLSAIGTIAA</sequence>
<reference key="1">
    <citation type="journal article" date="2003" name="Genome Res.">
        <title>Comparative complete genome sequence analysis of the amino acid replacements responsible for the thermostability of Corynebacterium efficiens.</title>
        <authorList>
            <person name="Nishio Y."/>
            <person name="Nakamura Y."/>
            <person name="Kawarabayasi Y."/>
            <person name="Usuda Y."/>
            <person name="Kimura E."/>
            <person name="Sugimoto S."/>
            <person name="Matsui K."/>
            <person name="Yamagishi A."/>
            <person name="Kikuchi H."/>
            <person name="Ikeo K."/>
            <person name="Gojobori T."/>
        </authorList>
    </citation>
    <scope>NUCLEOTIDE SEQUENCE [LARGE SCALE GENOMIC DNA]</scope>
    <source>
        <strain>DSM 44549 / YS-314 / AJ 12310 / JCM 11189 / NBRC 100395</strain>
    </source>
</reference>
<gene>
    <name evidence="1" type="primary">purQ</name>
    <name type="ordered locus">CE2481</name>
</gene>
<accession>Q8FMM2</accession>
<comment type="function">
    <text evidence="1">Part of the phosphoribosylformylglycinamidine synthase complex involved in the purines biosynthetic pathway. Catalyzes the ATP-dependent conversion of formylglycinamide ribonucleotide (FGAR) and glutamine to yield formylglycinamidine ribonucleotide (FGAM) and glutamate. The FGAM synthase complex is composed of three subunits. PurQ produces an ammonia molecule by converting glutamine to glutamate. PurL transfers the ammonia molecule to FGAR to form FGAM in an ATP-dependent manner. PurS interacts with PurQ and PurL and is thought to assist in the transfer of the ammonia molecule from PurQ to PurL.</text>
</comment>
<comment type="catalytic activity">
    <reaction evidence="1">
        <text>N(2)-formyl-N(1)-(5-phospho-beta-D-ribosyl)glycinamide + L-glutamine + ATP + H2O = 2-formamido-N(1)-(5-O-phospho-beta-D-ribosyl)acetamidine + L-glutamate + ADP + phosphate + H(+)</text>
        <dbReference type="Rhea" id="RHEA:17129"/>
        <dbReference type="ChEBI" id="CHEBI:15377"/>
        <dbReference type="ChEBI" id="CHEBI:15378"/>
        <dbReference type="ChEBI" id="CHEBI:29985"/>
        <dbReference type="ChEBI" id="CHEBI:30616"/>
        <dbReference type="ChEBI" id="CHEBI:43474"/>
        <dbReference type="ChEBI" id="CHEBI:58359"/>
        <dbReference type="ChEBI" id="CHEBI:147286"/>
        <dbReference type="ChEBI" id="CHEBI:147287"/>
        <dbReference type="ChEBI" id="CHEBI:456216"/>
        <dbReference type="EC" id="6.3.5.3"/>
    </reaction>
</comment>
<comment type="catalytic activity">
    <reaction evidence="1">
        <text>L-glutamine + H2O = L-glutamate + NH4(+)</text>
        <dbReference type="Rhea" id="RHEA:15889"/>
        <dbReference type="ChEBI" id="CHEBI:15377"/>
        <dbReference type="ChEBI" id="CHEBI:28938"/>
        <dbReference type="ChEBI" id="CHEBI:29985"/>
        <dbReference type="ChEBI" id="CHEBI:58359"/>
        <dbReference type="EC" id="3.5.1.2"/>
    </reaction>
</comment>
<comment type="pathway">
    <text evidence="1">Purine metabolism; IMP biosynthesis via de novo pathway; 5-amino-1-(5-phospho-D-ribosyl)imidazole from N(2)-formyl-N(1)-(5-phospho-D-ribosyl)glycinamide: step 1/2.</text>
</comment>
<comment type="subunit">
    <text evidence="1">Part of the FGAM synthase complex composed of 1 PurL, 1 PurQ and 2 PurS subunits.</text>
</comment>
<comment type="subcellular location">
    <subcellularLocation>
        <location evidence="1">Cytoplasm</location>
    </subcellularLocation>
</comment>
<proteinExistence type="inferred from homology"/>
<evidence type="ECO:0000255" key="1">
    <source>
        <dbReference type="HAMAP-Rule" id="MF_00421"/>
    </source>
</evidence>
<organism>
    <name type="scientific">Corynebacterium efficiens (strain DSM 44549 / YS-314 / AJ 12310 / JCM 11189 / NBRC 100395)</name>
    <dbReference type="NCBI Taxonomy" id="196164"/>
    <lineage>
        <taxon>Bacteria</taxon>
        <taxon>Bacillati</taxon>
        <taxon>Actinomycetota</taxon>
        <taxon>Actinomycetes</taxon>
        <taxon>Mycobacteriales</taxon>
        <taxon>Corynebacteriaceae</taxon>
        <taxon>Corynebacterium</taxon>
    </lineage>
</organism>
<protein>
    <recommendedName>
        <fullName evidence="1">Phosphoribosylformylglycinamidine synthase subunit PurQ</fullName>
        <shortName evidence="1">FGAM synthase</shortName>
        <ecNumber evidence="1">6.3.5.3</ecNumber>
    </recommendedName>
    <alternativeName>
        <fullName evidence="1">Formylglycinamide ribonucleotide amidotransferase subunit I</fullName>
        <shortName evidence="1">FGAR amidotransferase I</shortName>
        <shortName evidence="1">FGAR-AT I</shortName>
    </alternativeName>
    <alternativeName>
        <fullName evidence="1">Glutaminase PurQ</fullName>
        <ecNumber evidence="1">3.5.1.2</ecNumber>
    </alternativeName>
    <alternativeName>
        <fullName evidence="1">Phosphoribosylformylglycinamidine synthase subunit I</fullName>
    </alternativeName>
</protein>
<keyword id="KW-0067">ATP-binding</keyword>
<keyword id="KW-0963">Cytoplasm</keyword>
<keyword id="KW-0315">Glutamine amidotransferase</keyword>
<keyword id="KW-0378">Hydrolase</keyword>
<keyword id="KW-0436">Ligase</keyword>
<keyword id="KW-0547">Nucleotide-binding</keyword>
<keyword id="KW-0658">Purine biosynthesis</keyword>
<keyword id="KW-1185">Reference proteome</keyword>
<name>PURQ_COREF</name>